<organism>
    <name type="scientific">Legionella pneumophila (strain Paris)</name>
    <dbReference type="NCBI Taxonomy" id="297246"/>
    <lineage>
        <taxon>Bacteria</taxon>
        <taxon>Pseudomonadati</taxon>
        <taxon>Pseudomonadota</taxon>
        <taxon>Gammaproteobacteria</taxon>
        <taxon>Legionellales</taxon>
        <taxon>Legionellaceae</taxon>
        <taxon>Legionella</taxon>
    </lineage>
</organism>
<sequence length="456" mass="51570">MLHLYNSLTRKKEPFVSLRPGKIGMYVCGITVYDHCHLGHARSMVAFDVMVRYLRSQGFDVTYVRNITDIDDKIIARASERGVSIDELTAQYIDAMNNDTHALNILPPDHEPRATGHIETIIRLIQRLLEKGNAYVSDNGDVCYEVDTFPEYGKLSHKDIEGLVSGSRVEIVKEKRSPLDFVLWKKAKPGEPSWPSPWGEGRPGWHIECSAMAMHELGEQFDIHGGGLDLQFPHHENEIAQSEAATGKPFANYWLHVGMLQVNGEKMAKSIGNFYTIADVLKEHHPEVIRYFLLSSHYRSPLNYSEENLLNAKKALIRLYQAVKDVPPQTADSKLDEYWQEQFNQAMNDDFNTPVALSVLFQLAHEVNKSNSPALAHTLKNLAGILGFLQKDPESFLQSGLAEEEKLVIEQLIAERLQARAERNWAKADQIRADLLSKGIELEDGATGTTWRRIAE</sequence>
<proteinExistence type="inferred from homology"/>
<gene>
    <name evidence="1" type="primary">cysS</name>
    <name type="ordered locus">lpp1271</name>
</gene>
<accession>Q5X5P9</accession>
<dbReference type="EC" id="6.1.1.16" evidence="1"/>
<dbReference type="EMBL" id="CR628336">
    <property type="protein sequence ID" value="CAH12422.1"/>
    <property type="molecule type" value="Genomic_DNA"/>
</dbReference>
<dbReference type="RefSeq" id="WP_011213618.1">
    <property type="nucleotide sequence ID" value="NC_006368.1"/>
</dbReference>
<dbReference type="SMR" id="Q5X5P9"/>
<dbReference type="KEGG" id="lpp:lpp1271"/>
<dbReference type="LegioList" id="lpp1271"/>
<dbReference type="HOGENOM" id="CLU_013528_0_1_6"/>
<dbReference type="GO" id="GO:0005829">
    <property type="term" value="C:cytosol"/>
    <property type="evidence" value="ECO:0007669"/>
    <property type="project" value="TreeGrafter"/>
</dbReference>
<dbReference type="GO" id="GO:0005524">
    <property type="term" value="F:ATP binding"/>
    <property type="evidence" value="ECO:0007669"/>
    <property type="project" value="UniProtKB-UniRule"/>
</dbReference>
<dbReference type="GO" id="GO:0004817">
    <property type="term" value="F:cysteine-tRNA ligase activity"/>
    <property type="evidence" value="ECO:0007669"/>
    <property type="project" value="UniProtKB-UniRule"/>
</dbReference>
<dbReference type="GO" id="GO:0008270">
    <property type="term" value="F:zinc ion binding"/>
    <property type="evidence" value="ECO:0007669"/>
    <property type="project" value="UniProtKB-UniRule"/>
</dbReference>
<dbReference type="GO" id="GO:0006423">
    <property type="term" value="P:cysteinyl-tRNA aminoacylation"/>
    <property type="evidence" value="ECO:0007669"/>
    <property type="project" value="UniProtKB-UniRule"/>
</dbReference>
<dbReference type="CDD" id="cd07963">
    <property type="entry name" value="Anticodon_Ia_Cys"/>
    <property type="match status" value="1"/>
</dbReference>
<dbReference type="CDD" id="cd00672">
    <property type="entry name" value="CysRS_core"/>
    <property type="match status" value="1"/>
</dbReference>
<dbReference type="FunFam" id="3.40.50.620:FF:000009">
    <property type="entry name" value="Cysteine--tRNA ligase"/>
    <property type="match status" value="1"/>
</dbReference>
<dbReference type="Gene3D" id="1.20.120.1910">
    <property type="entry name" value="Cysteine-tRNA ligase, C-terminal anti-codon recognition domain"/>
    <property type="match status" value="1"/>
</dbReference>
<dbReference type="Gene3D" id="3.40.50.620">
    <property type="entry name" value="HUPs"/>
    <property type="match status" value="1"/>
</dbReference>
<dbReference type="HAMAP" id="MF_00041">
    <property type="entry name" value="Cys_tRNA_synth"/>
    <property type="match status" value="1"/>
</dbReference>
<dbReference type="InterPro" id="IPR015803">
    <property type="entry name" value="Cys-tRNA-ligase"/>
</dbReference>
<dbReference type="InterPro" id="IPR015273">
    <property type="entry name" value="Cys-tRNA-synt_Ia_DALR"/>
</dbReference>
<dbReference type="InterPro" id="IPR024909">
    <property type="entry name" value="Cys-tRNA/MSH_ligase"/>
</dbReference>
<dbReference type="InterPro" id="IPR056411">
    <property type="entry name" value="CysS_C"/>
</dbReference>
<dbReference type="InterPro" id="IPR014729">
    <property type="entry name" value="Rossmann-like_a/b/a_fold"/>
</dbReference>
<dbReference type="InterPro" id="IPR032678">
    <property type="entry name" value="tRNA-synt_1_cat_dom"/>
</dbReference>
<dbReference type="InterPro" id="IPR009080">
    <property type="entry name" value="tRNAsynth_Ia_anticodon-bd"/>
</dbReference>
<dbReference type="NCBIfam" id="TIGR00435">
    <property type="entry name" value="cysS"/>
    <property type="match status" value="1"/>
</dbReference>
<dbReference type="PANTHER" id="PTHR10890:SF3">
    <property type="entry name" value="CYSTEINE--TRNA LIGASE, CYTOPLASMIC"/>
    <property type="match status" value="1"/>
</dbReference>
<dbReference type="PANTHER" id="PTHR10890">
    <property type="entry name" value="CYSTEINYL-TRNA SYNTHETASE"/>
    <property type="match status" value="1"/>
</dbReference>
<dbReference type="Pfam" id="PF23493">
    <property type="entry name" value="CysS_C"/>
    <property type="match status" value="1"/>
</dbReference>
<dbReference type="Pfam" id="PF09190">
    <property type="entry name" value="DALR_2"/>
    <property type="match status" value="1"/>
</dbReference>
<dbReference type="Pfam" id="PF01406">
    <property type="entry name" value="tRNA-synt_1e"/>
    <property type="match status" value="1"/>
</dbReference>
<dbReference type="PRINTS" id="PR00983">
    <property type="entry name" value="TRNASYNTHCYS"/>
</dbReference>
<dbReference type="SMART" id="SM00840">
    <property type="entry name" value="DALR_2"/>
    <property type="match status" value="1"/>
</dbReference>
<dbReference type="SUPFAM" id="SSF47323">
    <property type="entry name" value="Anticodon-binding domain of a subclass of class I aminoacyl-tRNA synthetases"/>
    <property type="match status" value="1"/>
</dbReference>
<dbReference type="SUPFAM" id="SSF52374">
    <property type="entry name" value="Nucleotidylyl transferase"/>
    <property type="match status" value="1"/>
</dbReference>
<evidence type="ECO:0000255" key="1">
    <source>
        <dbReference type="HAMAP-Rule" id="MF_00041"/>
    </source>
</evidence>
<feature type="chain" id="PRO_0000159415" description="Cysteine--tRNA ligase">
    <location>
        <begin position="1"/>
        <end position="456"/>
    </location>
</feature>
<feature type="short sequence motif" description="'HIGH' region">
    <location>
        <begin position="30"/>
        <end position="40"/>
    </location>
</feature>
<feature type="short sequence motif" description="'KMSKS' region">
    <location>
        <begin position="266"/>
        <end position="270"/>
    </location>
</feature>
<feature type="binding site" evidence="1">
    <location>
        <position position="28"/>
    </location>
    <ligand>
        <name>Zn(2+)</name>
        <dbReference type="ChEBI" id="CHEBI:29105"/>
    </ligand>
</feature>
<feature type="binding site" evidence="1">
    <location>
        <position position="209"/>
    </location>
    <ligand>
        <name>Zn(2+)</name>
        <dbReference type="ChEBI" id="CHEBI:29105"/>
    </ligand>
</feature>
<feature type="binding site" evidence="1">
    <location>
        <position position="234"/>
    </location>
    <ligand>
        <name>Zn(2+)</name>
        <dbReference type="ChEBI" id="CHEBI:29105"/>
    </ligand>
</feature>
<feature type="binding site" evidence="1">
    <location>
        <position position="238"/>
    </location>
    <ligand>
        <name>Zn(2+)</name>
        <dbReference type="ChEBI" id="CHEBI:29105"/>
    </ligand>
</feature>
<feature type="binding site" evidence="1">
    <location>
        <position position="269"/>
    </location>
    <ligand>
        <name>ATP</name>
        <dbReference type="ChEBI" id="CHEBI:30616"/>
    </ligand>
</feature>
<reference key="1">
    <citation type="journal article" date="2004" name="Nat. Genet.">
        <title>Evidence in the Legionella pneumophila genome for exploitation of host cell functions and high genome plasticity.</title>
        <authorList>
            <person name="Cazalet C."/>
            <person name="Rusniok C."/>
            <person name="Brueggemann H."/>
            <person name="Zidane N."/>
            <person name="Magnier A."/>
            <person name="Ma L."/>
            <person name="Tichit M."/>
            <person name="Jarraud S."/>
            <person name="Bouchier C."/>
            <person name="Vandenesch F."/>
            <person name="Kunst F."/>
            <person name="Etienne J."/>
            <person name="Glaser P."/>
            <person name="Buchrieser C."/>
        </authorList>
    </citation>
    <scope>NUCLEOTIDE SEQUENCE [LARGE SCALE GENOMIC DNA]</scope>
    <source>
        <strain>Paris</strain>
    </source>
</reference>
<protein>
    <recommendedName>
        <fullName evidence="1">Cysteine--tRNA ligase</fullName>
        <ecNumber evidence="1">6.1.1.16</ecNumber>
    </recommendedName>
    <alternativeName>
        <fullName evidence="1">Cysteinyl-tRNA synthetase</fullName>
        <shortName evidence="1">CysRS</shortName>
    </alternativeName>
</protein>
<name>SYC_LEGPA</name>
<comment type="catalytic activity">
    <reaction evidence="1">
        <text>tRNA(Cys) + L-cysteine + ATP = L-cysteinyl-tRNA(Cys) + AMP + diphosphate</text>
        <dbReference type="Rhea" id="RHEA:17773"/>
        <dbReference type="Rhea" id="RHEA-COMP:9661"/>
        <dbReference type="Rhea" id="RHEA-COMP:9679"/>
        <dbReference type="ChEBI" id="CHEBI:30616"/>
        <dbReference type="ChEBI" id="CHEBI:33019"/>
        <dbReference type="ChEBI" id="CHEBI:35235"/>
        <dbReference type="ChEBI" id="CHEBI:78442"/>
        <dbReference type="ChEBI" id="CHEBI:78517"/>
        <dbReference type="ChEBI" id="CHEBI:456215"/>
        <dbReference type="EC" id="6.1.1.16"/>
    </reaction>
</comment>
<comment type="cofactor">
    <cofactor evidence="1">
        <name>Zn(2+)</name>
        <dbReference type="ChEBI" id="CHEBI:29105"/>
    </cofactor>
    <text evidence="1">Binds 1 zinc ion per subunit.</text>
</comment>
<comment type="subunit">
    <text evidence="1">Monomer.</text>
</comment>
<comment type="subcellular location">
    <subcellularLocation>
        <location evidence="1">Cytoplasm</location>
    </subcellularLocation>
</comment>
<comment type="similarity">
    <text evidence="1">Belongs to the class-I aminoacyl-tRNA synthetase family.</text>
</comment>
<keyword id="KW-0030">Aminoacyl-tRNA synthetase</keyword>
<keyword id="KW-0067">ATP-binding</keyword>
<keyword id="KW-0963">Cytoplasm</keyword>
<keyword id="KW-0436">Ligase</keyword>
<keyword id="KW-0479">Metal-binding</keyword>
<keyword id="KW-0547">Nucleotide-binding</keyword>
<keyword id="KW-0648">Protein biosynthesis</keyword>
<keyword id="KW-0862">Zinc</keyword>